<organism>
    <name type="scientific">Staphylococcus aureus (strain NCTC 8325 / PS 47)</name>
    <dbReference type="NCBI Taxonomy" id="93061"/>
    <lineage>
        <taxon>Bacteria</taxon>
        <taxon>Bacillati</taxon>
        <taxon>Bacillota</taxon>
        <taxon>Bacilli</taxon>
        <taxon>Bacillales</taxon>
        <taxon>Staphylococcaceae</taxon>
        <taxon>Staphylococcus</taxon>
    </lineage>
</organism>
<dbReference type="EMBL" id="CP000253">
    <property type="protein sequence ID" value="ABD31967.1"/>
    <property type="molecule type" value="Genomic_DNA"/>
</dbReference>
<dbReference type="RefSeq" id="WP_001125611.1">
    <property type="nucleotide sequence ID" value="NZ_LS483365.1"/>
</dbReference>
<dbReference type="RefSeq" id="YP_501429.1">
    <property type="nucleotide sequence ID" value="NC_007795.1"/>
</dbReference>
<dbReference type="PDB" id="5T1Q">
    <property type="method" value="X-ray"/>
    <property type="resolution" value="2.15 A"/>
    <property type="chains" value="A/B/C/D=261-619"/>
</dbReference>
<dbReference type="PDBsum" id="5T1Q"/>
<dbReference type="SMR" id="Q2G222"/>
<dbReference type="STRING" id="93061.SAOUHSC_02979"/>
<dbReference type="CAZy" id="GH73">
    <property type="family name" value="Glycoside Hydrolase Family 73"/>
</dbReference>
<dbReference type="PaxDb" id="1280-SAXN108_2915"/>
<dbReference type="GeneID" id="3921462"/>
<dbReference type="KEGG" id="sao:SAOUHSC_02979"/>
<dbReference type="PATRIC" id="fig|93061.5.peg.2687"/>
<dbReference type="eggNOG" id="COG1705">
    <property type="taxonomic scope" value="Bacteria"/>
</dbReference>
<dbReference type="eggNOG" id="COG3942">
    <property type="taxonomic scope" value="Bacteria"/>
</dbReference>
<dbReference type="HOGENOM" id="CLU_017855_1_0_9"/>
<dbReference type="OrthoDB" id="977752at2"/>
<dbReference type="PRO" id="PR:Q2G222"/>
<dbReference type="Proteomes" id="UP000008816">
    <property type="component" value="Chromosome"/>
</dbReference>
<dbReference type="GO" id="GO:0005576">
    <property type="term" value="C:extracellular region"/>
    <property type="evidence" value="ECO:0007669"/>
    <property type="project" value="UniProtKB-SubCell"/>
</dbReference>
<dbReference type="GO" id="GO:0004040">
    <property type="term" value="F:amidase activity"/>
    <property type="evidence" value="ECO:0007669"/>
    <property type="project" value="InterPro"/>
</dbReference>
<dbReference type="Gene3D" id="1.10.530.10">
    <property type="match status" value="1"/>
</dbReference>
<dbReference type="Gene3D" id="4.10.80.30">
    <property type="entry name" value="DNA polymerase, domain 6"/>
    <property type="match status" value="1"/>
</dbReference>
<dbReference type="Gene3D" id="3.90.1720.10">
    <property type="entry name" value="endopeptidase domain like (from Nostoc punctiforme)"/>
    <property type="match status" value="1"/>
</dbReference>
<dbReference type="InterPro" id="IPR007921">
    <property type="entry name" value="CHAP_dom"/>
</dbReference>
<dbReference type="InterPro" id="IPR051056">
    <property type="entry name" value="Glycosyl_Hydrolase_73"/>
</dbReference>
<dbReference type="InterPro" id="IPR002901">
    <property type="entry name" value="MGlyc_endo_b_GlcNAc-like_dom"/>
</dbReference>
<dbReference type="InterPro" id="IPR038765">
    <property type="entry name" value="Papain-like_cys_pep_sf"/>
</dbReference>
<dbReference type="NCBIfam" id="NF006359">
    <property type="entry name" value="PRK08581.1-1"/>
    <property type="match status" value="1"/>
</dbReference>
<dbReference type="NCBIfam" id="NF006360">
    <property type="entry name" value="PRK08581.1-2"/>
    <property type="match status" value="1"/>
</dbReference>
<dbReference type="PANTHER" id="PTHR33308">
    <property type="entry name" value="PEPTIDOGLYCAN HYDROLASE FLGJ"/>
    <property type="match status" value="1"/>
</dbReference>
<dbReference type="PANTHER" id="PTHR33308:SF9">
    <property type="entry name" value="PEPTIDOGLYCAN HYDROLASE FLGJ"/>
    <property type="match status" value="1"/>
</dbReference>
<dbReference type="Pfam" id="PF05257">
    <property type="entry name" value="CHAP"/>
    <property type="match status" value="1"/>
</dbReference>
<dbReference type="Pfam" id="PF01832">
    <property type="entry name" value="Glucosaminidase"/>
    <property type="match status" value="1"/>
</dbReference>
<dbReference type="SMART" id="SM00047">
    <property type="entry name" value="LYZ2"/>
    <property type="match status" value="1"/>
</dbReference>
<dbReference type="SUPFAM" id="SSF54001">
    <property type="entry name" value="Cysteine proteinases"/>
    <property type="match status" value="1"/>
</dbReference>
<dbReference type="PROSITE" id="PS50911">
    <property type="entry name" value="CHAP"/>
    <property type="match status" value="1"/>
</dbReference>
<accession>Q2G222</accession>
<evidence type="ECO:0000255" key="1"/>
<evidence type="ECO:0000255" key="2">
    <source>
        <dbReference type="PROSITE-ProRule" id="PRU00048"/>
    </source>
</evidence>
<evidence type="ECO:0000256" key="3">
    <source>
        <dbReference type="SAM" id="MobiDB-lite"/>
    </source>
</evidence>
<evidence type="ECO:0000269" key="4">
    <source>
    </source>
</evidence>
<evidence type="ECO:0000269" key="5">
    <source>
    </source>
</evidence>
<evidence type="ECO:0000305" key="6"/>
<evidence type="ECO:0007829" key="7">
    <source>
        <dbReference type="PDB" id="5T1Q"/>
    </source>
</evidence>
<comment type="subcellular location">
    <subcellularLocation>
        <location evidence="4 5">Secreted</location>
    </subcellularLocation>
</comment>
<comment type="induction">
    <text evidence="4 5">More protein is secreted in a secA2 mutant (PubMed:18621893), while less protein is secreted in a secG or double secG/secY2 mutant (PubMed:20472795) (at protein level).</text>
</comment>
<comment type="similarity">
    <text evidence="6">In the N-terminal section; belongs to the N-acetylmuramoyl-L-alanine amidase 2 family.</text>
</comment>
<sequence>MPKNKILIYLLSTTLVLPTLVSPTAYADTPQKDTTAKTTSHDSKKSNDDETSKDTTSKDIDKADKNNTSNQDNNDKKFKTIDDSTSDSNNIIDFIYKNLPQTNINQLLTKNKYDDNYSLTTLIQNLFNLNSDISDYEQPRNGEKSTNDSNKNSDNSIKNDTDTQSSKQDKADNQKAPKSNNTKPSTSNKQPNSPKPTQPNQSNSQPASDDKANQKSSSKDNQSMSDSALDSILDQYSEDAKKTQKDYASQSKKDKNEKSNTKNPQLPTQDELKHKSKPAQSFNNDVNQKDTRATSLFETDPSISNNDDSGQFNVVDSKDTRQFVKSIAKDAHRIGQDNDIYASVMIAQAILESDSGRSALAKSPNHNLFGIKGAFEGNSVPFNTLEADGNQLYSINAGFRKYPSTKESLKDYSDLIKNGIDGNRTIYKPTWKSEADSYKDATSHLSKTYATDPNYAKKLNSIIKHYQLTQFDDERMPDLDKYERSIKDYDDSSDEFKPFREVSDSMPYPHGQCTWYVYNRMKQFGTSISGDLGDAHNWNNRAQYRDYQVSHTPKRHAAVVFEAGQFGADQHYGHVAFVEKVNSDGSIVISESNVKGLGIISHRTINAAAAEELSYITGK</sequence>
<gene>
    <name type="ordered locus">SAOUHSC_02979</name>
</gene>
<keyword id="KW-0002">3D-structure</keyword>
<keyword id="KW-0378">Hydrolase</keyword>
<keyword id="KW-1185">Reference proteome</keyword>
<keyword id="KW-0964">Secreted</keyword>
<keyword id="KW-0732">Signal</keyword>
<name>Y2979_STAA8</name>
<proteinExistence type="evidence at protein level"/>
<reference key="1">
    <citation type="book" date="2006" name="Gram positive pathogens, 2nd edition">
        <title>The Staphylococcus aureus NCTC 8325 genome.</title>
        <editorList>
            <person name="Fischetti V."/>
            <person name="Novick R."/>
            <person name="Ferretti J."/>
            <person name="Portnoy D."/>
            <person name="Rood J."/>
        </editorList>
        <authorList>
            <person name="Gillaspy A.F."/>
            <person name="Worrell V."/>
            <person name="Orvis J."/>
            <person name="Roe B.A."/>
            <person name="Dyer D.W."/>
            <person name="Iandolo J.J."/>
        </authorList>
    </citation>
    <scope>NUCLEOTIDE SEQUENCE [LARGE SCALE GENOMIC DNA]</scope>
    <source>
        <strain>NCTC 8325 / PS 47</strain>
    </source>
</reference>
<reference key="2">
    <citation type="journal article" date="2008" name="J. Bacteriol.">
        <title>Characterization of the accessory Sec system of Staphylococcus aureus.</title>
        <authorList>
            <person name="Siboo I.R."/>
            <person name="Chaffin D.O."/>
            <person name="Rubens C.E."/>
            <person name="Sullam P.M."/>
        </authorList>
    </citation>
    <scope>IDENTIFICATION BY MASS SPECTROMETRY</scope>
    <scope>SUBCELLULAR LOCATION</scope>
    <scope>INDUCTION</scope>
    <source>
        <strain>ISP479C</strain>
    </source>
</reference>
<reference key="3">
    <citation type="journal article" date="2010" name="J. Bacteriol.">
        <title>Synthetic effects of secG and secY2 mutations on exoproteome biogenesis in Staphylococcus aureus.</title>
        <authorList>
            <person name="Sibbald M.J."/>
            <person name="Winter T."/>
            <person name="van der Kooi-Pol M.M."/>
            <person name="Buist G."/>
            <person name="Tsompanidou E."/>
            <person name="Bosma T."/>
            <person name="Schafer T."/>
            <person name="Ohlsen K."/>
            <person name="Hecker M."/>
            <person name="Antelmann H."/>
            <person name="Engelmann S."/>
            <person name="van Dijl J.M."/>
        </authorList>
    </citation>
    <scope>IDENTIFICATION BY MASS SPECTROMETRY</scope>
    <scope>SUBCELLULAR LOCATION</scope>
    <scope>INDUCTION</scope>
    <source>
        <strain>RN4220</strain>
    </source>
</reference>
<feature type="signal peptide" evidence="1">
    <location>
        <begin position="1"/>
        <end position="27"/>
    </location>
</feature>
<feature type="chain" id="PRO_0000414194" description="N-acetylmuramoyl-L-alanine amidase domain-containing protein SAOUHSC_02979">
    <location>
        <begin position="28"/>
        <end position="619"/>
    </location>
</feature>
<feature type="domain" description="Peptidase C51" evidence="2">
    <location>
        <begin position="488"/>
        <end position="617"/>
    </location>
</feature>
<feature type="region of interest" description="Disordered" evidence="3">
    <location>
        <begin position="25"/>
        <end position="83"/>
    </location>
</feature>
<feature type="region of interest" description="Disordered" evidence="3">
    <location>
        <begin position="134"/>
        <end position="226"/>
    </location>
</feature>
<feature type="region of interest" description="Disordered" evidence="3">
    <location>
        <begin position="238"/>
        <end position="290"/>
    </location>
</feature>
<feature type="region of interest" description="N-acetylmuramoyl-L-alanine amidase">
    <location>
        <begin position="327"/>
        <end position="468"/>
    </location>
</feature>
<feature type="compositionally biased region" description="Basic and acidic residues" evidence="3">
    <location>
        <begin position="30"/>
        <end position="65"/>
    </location>
</feature>
<feature type="compositionally biased region" description="Basic and acidic residues" evidence="3">
    <location>
        <begin position="73"/>
        <end position="82"/>
    </location>
</feature>
<feature type="compositionally biased region" description="Basic and acidic residues" evidence="3">
    <location>
        <begin position="137"/>
        <end position="146"/>
    </location>
</feature>
<feature type="compositionally biased region" description="Low complexity" evidence="3">
    <location>
        <begin position="147"/>
        <end position="156"/>
    </location>
</feature>
<feature type="compositionally biased region" description="Basic and acidic residues" evidence="3">
    <location>
        <begin position="157"/>
        <end position="175"/>
    </location>
</feature>
<feature type="compositionally biased region" description="Polar residues" evidence="3">
    <location>
        <begin position="176"/>
        <end position="192"/>
    </location>
</feature>
<feature type="compositionally biased region" description="Low complexity" evidence="3">
    <location>
        <begin position="214"/>
        <end position="226"/>
    </location>
</feature>
<feature type="compositionally biased region" description="Basic and acidic residues" evidence="3">
    <location>
        <begin position="238"/>
        <end position="260"/>
    </location>
</feature>
<feature type="helix" evidence="7">
    <location>
        <begin position="269"/>
        <end position="273"/>
    </location>
</feature>
<feature type="strand" evidence="7">
    <location>
        <begin position="284"/>
        <end position="286"/>
    </location>
</feature>
<feature type="helix" evidence="7">
    <location>
        <begin position="288"/>
        <end position="290"/>
    </location>
</feature>
<feature type="strand" evidence="7">
    <location>
        <begin position="297"/>
        <end position="299"/>
    </location>
</feature>
<feature type="strand" evidence="7">
    <location>
        <begin position="312"/>
        <end position="314"/>
    </location>
</feature>
<feature type="helix" evidence="7">
    <location>
        <begin position="318"/>
        <end position="338"/>
    </location>
</feature>
<feature type="helix" evidence="7">
    <location>
        <begin position="342"/>
        <end position="353"/>
    </location>
</feature>
<feature type="turn" evidence="7">
    <location>
        <begin position="354"/>
        <end position="357"/>
    </location>
</feature>
<feature type="turn" evidence="7">
    <location>
        <begin position="359"/>
        <end position="361"/>
    </location>
</feature>
<feature type="turn" evidence="7">
    <location>
        <begin position="363"/>
        <end position="365"/>
    </location>
</feature>
<feature type="strand" evidence="7">
    <location>
        <begin position="378"/>
        <end position="388"/>
    </location>
</feature>
<feature type="strand" evidence="7">
    <location>
        <begin position="391"/>
        <end position="400"/>
    </location>
</feature>
<feature type="helix" evidence="7">
    <location>
        <begin position="405"/>
        <end position="418"/>
    </location>
</feature>
<feature type="turn" evidence="7">
    <location>
        <begin position="424"/>
        <end position="427"/>
    </location>
</feature>
<feature type="helix" evidence="7">
    <location>
        <begin position="428"/>
        <end position="430"/>
    </location>
</feature>
<feature type="turn" evidence="7">
    <location>
        <begin position="432"/>
        <end position="434"/>
    </location>
</feature>
<feature type="helix" evidence="7">
    <location>
        <begin position="438"/>
        <end position="445"/>
    </location>
</feature>
<feature type="turn" evidence="7">
    <location>
        <begin position="446"/>
        <end position="449"/>
    </location>
</feature>
<feature type="helix" evidence="7">
    <location>
        <begin position="455"/>
        <end position="465"/>
    </location>
</feature>
<feature type="helix" evidence="7">
    <location>
        <begin position="468"/>
        <end position="471"/>
    </location>
</feature>
<feature type="strand" evidence="7">
    <location>
        <begin position="473"/>
        <end position="475"/>
    </location>
</feature>
<feature type="helix" evidence="7">
    <location>
        <begin position="479"/>
        <end position="481"/>
    </location>
</feature>
<feature type="helix" evidence="7">
    <location>
        <begin position="482"/>
        <end position="485"/>
    </location>
</feature>
<feature type="helix" evidence="7">
    <location>
        <begin position="513"/>
        <end position="522"/>
    </location>
</feature>
<feature type="turn" evidence="7">
    <location>
        <begin position="523"/>
        <end position="525"/>
    </location>
</feature>
<feature type="helix" evidence="7">
    <location>
        <begin position="535"/>
        <end position="537"/>
    </location>
</feature>
<feature type="helix" evidence="7">
    <location>
        <begin position="538"/>
        <end position="544"/>
    </location>
</feature>
<feature type="strand" evidence="7">
    <location>
        <begin position="548"/>
        <end position="552"/>
    </location>
</feature>
<feature type="strand" evidence="7">
    <location>
        <begin position="558"/>
        <end position="561"/>
    </location>
</feature>
<feature type="helix" evidence="7">
    <location>
        <begin position="565"/>
        <end position="567"/>
    </location>
</feature>
<feature type="turn" evidence="7">
    <location>
        <begin position="570"/>
        <end position="572"/>
    </location>
</feature>
<feature type="strand" evidence="7">
    <location>
        <begin position="574"/>
        <end position="581"/>
    </location>
</feature>
<feature type="strand" evidence="7">
    <location>
        <begin position="587"/>
        <end position="596"/>
    </location>
</feature>
<feature type="strand" evidence="7">
    <location>
        <begin position="599"/>
        <end position="605"/>
    </location>
</feature>
<feature type="helix" evidence="7">
    <location>
        <begin position="607"/>
        <end position="610"/>
    </location>
</feature>
<feature type="strand" evidence="7">
    <location>
        <begin position="613"/>
        <end position="617"/>
    </location>
</feature>
<protein>
    <recommendedName>
        <fullName>N-acetylmuramoyl-L-alanine amidase domain-containing protein SAOUHSC_02979</fullName>
    </recommendedName>
</protein>